<proteinExistence type="evidence at protein level"/>
<dbReference type="EMBL" id="X58387">
    <property type="protein sequence ID" value="CAA41277.1"/>
    <property type="molecule type" value="Genomic_DNA"/>
</dbReference>
<dbReference type="EMBL" id="AF027868">
    <property type="protein sequence ID" value="AAB84466.1"/>
    <property type="molecule type" value="Genomic_DNA"/>
</dbReference>
<dbReference type="EMBL" id="AL009126">
    <property type="protein sequence ID" value="CAB13796.1"/>
    <property type="molecule type" value="Genomic_DNA"/>
</dbReference>
<dbReference type="PIR" id="E69607">
    <property type="entry name" value="E69607"/>
</dbReference>
<dbReference type="RefSeq" id="NP_389785.1">
    <property type="nucleotide sequence ID" value="NC_000964.3"/>
</dbReference>
<dbReference type="RefSeq" id="WP_004399582.1">
    <property type="nucleotide sequence ID" value="NZ_OZ025638.1"/>
</dbReference>
<dbReference type="PDB" id="2NZH">
    <property type="method" value="X-ray"/>
    <property type="resolution" value="1.90 A"/>
    <property type="chains" value="A/B=1-110"/>
</dbReference>
<dbReference type="PDB" id="2NZO">
    <property type="method" value="X-ray"/>
    <property type="resolution" value="2.00 A"/>
    <property type="chains" value="A/B/C/D=1-110"/>
</dbReference>
<dbReference type="PDBsum" id="2NZH"/>
<dbReference type="PDBsum" id="2NZO"/>
<dbReference type="SMR" id="P37584"/>
<dbReference type="FunCoup" id="P37584">
    <property type="interactions" value="165"/>
</dbReference>
<dbReference type="STRING" id="224308.BSU19040"/>
<dbReference type="PaxDb" id="224308-BSU19040"/>
<dbReference type="EnsemblBacteria" id="CAB13796">
    <property type="protein sequence ID" value="CAB13796"/>
    <property type="gene ID" value="BSU_19040"/>
</dbReference>
<dbReference type="GeneID" id="939631"/>
<dbReference type="KEGG" id="bsu:BSU19040"/>
<dbReference type="PATRIC" id="fig|224308.179.peg.2082"/>
<dbReference type="eggNOG" id="COG0073">
    <property type="taxonomic scope" value="Bacteria"/>
</dbReference>
<dbReference type="InParanoid" id="P37584"/>
<dbReference type="OrthoDB" id="9794564at2"/>
<dbReference type="PhylomeDB" id="P37584"/>
<dbReference type="BioCyc" id="BSUB:BSU19040-MONOMER"/>
<dbReference type="EvolutionaryTrace" id="P37584"/>
<dbReference type="Proteomes" id="UP000001570">
    <property type="component" value="Chromosome"/>
</dbReference>
<dbReference type="GO" id="GO:0005737">
    <property type="term" value="C:cytoplasm"/>
    <property type="evidence" value="ECO:0007669"/>
    <property type="project" value="UniProtKB-SubCell"/>
</dbReference>
<dbReference type="GO" id="GO:0000049">
    <property type="term" value="F:tRNA binding"/>
    <property type="evidence" value="ECO:0007669"/>
    <property type="project" value="UniProtKB-KW"/>
</dbReference>
<dbReference type="GO" id="GO:0015031">
    <property type="term" value="P:protein transport"/>
    <property type="evidence" value="ECO:0007669"/>
    <property type="project" value="UniProtKB-KW"/>
</dbReference>
<dbReference type="CDD" id="cd02798">
    <property type="entry name" value="tRNA_bind_CsaA"/>
    <property type="match status" value="1"/>
</dbReference>
<dbReference type="FunFam" id="2.40.50.140:FF:000165">
    <property type="entry name" value="Chaperone CsaA"/>
    <property type="match status" value="1"/>
</dbReference>
<dbReference type="Gene3D" id="2.40.50.140">
    <property type="entry name" value="Nucleic acid-binding proteins"/>
    <property type="match status" value="1"/>
</dbReference>
<dbReference type="InterPro" id="IPR008231">
    <property type="entry name" value="CsaA"/>
</dbReference>
<dbReference type="InterPro" id="IPR012340">
    <property type="entry name" value="NA-bd_OB-fold"/>
</dbReference>
<dbReference type="InterPro" id="IPR002547">
    <property type="entry name" value="tRNA-bd_dom"/>
</dbReference>
<dbReference type="InterPro" id="IPR051270">
    <property type="entry name" value="Tyrosine-tRNA_ligase_regulator"/>
</dbReference>
<dbReference type="NCBIfam" id="TIGR02222">
    <property type="entry name" value="chap_CsaA"/>
    <property type="match status" value="1"/>
</dbReference>
<dbReference type="NCBIfam" id="NF007494">
    <property type="entry name" value="PRK10089.1-3"/>
    <property type="match status" value="1"/>
</dbReference>
<dbReference type="NCBIfam" id="NF007495">
    <property type="entry name" value="PRK10089.1-4"/>
    <property type="match status" value="1"/>
</dbReference>
<dbReference type="NCBIfam" id="NF007496">
    <property type="entry name" value="PRK10089.1-5"/>
    <property type="match status" value="1"/>
</dbReference>
<dbReference type="PANTHER" id="PTHR11586">
    <property type="entry name" value="TRNA-AMINOACYLATION COFACTOR ARC1 FAMILY MEMBER"/>
    <property type="match status" value="1"/>
</dbReference>
<dbReference type="PANTHER" id="PTHR11586:SF37">
    <property type="entry name" value="TRNA-BINDING DOMAIN-CONTAINING PROTEIN"/>
    <property type="match status" value="1"/>
</dbReference>
<dbReference type="Pfam" id="PF01588">
    <property type="entry name" value="tRNA_bind"/>
    <property type="match status" value="1"/>
</dbReference>
<dbReference type="SUPFAM" id="SSF50249">
    <property type="entry name" value="Nucleic acid-binding proteins"/>
    <property type="match status" value="1"/>
</dbReference>
<dbReference type="PROSITE" id="PS50886">
    <property type="entry name" value="TRBD"/>
    <property type="match status" value="1"/>
</dbReference>
<organism>
    <name type="scientific">Bacillus subtilis (strain 168)</name>
    <dbReference type="NCBI Taxonomy" id="224308"/>
    <lineage>
        <taxon>Bacteria</taxon>
        <taxon>Bacillati</taxon>
        <taxon>Bacillota</taxon>
        <taxon>Bacilli</taxon>
        <taxon>Bacillales</taxon>
        <taxon>Bacillaceae</taxon>
        <taxon>Bacillus</taxon>
    </lineage>
</organism>
<accession>P37584</accession>
<evidence type="ECO:0000255" key="1">
    <source>
        <dbReference type="PROSITE-ProRule" id="PRU00209"/>
    </source>
</evidence>
<evidence type="ECO:0000269" key="2">
    <source>
    </source>
</evidence>
<evidence type="ECO:0000269" key="3">
    <source>
    </source>
</evidence>
<evidence type="ECO:0000269" key="4">
    <source>
    </source>
</evidence>
<evidence type="ECO:0000303" key="5">
    <source>
    </source>
</evidence>
<evidence type="ECO:0000305" key="6">
    <source>
    </source>
</evidence>
<evidence type="ECO:0000305" key="7">
    <source>
    </source>
</evidence>
<evidence type="ECO:0007829" key="8">
    <source>
        <dbReference type="PDB" id="2NZH"/>
    </source>
</evidence>
<feature type="chain" id="PRO_0000079389" description="Probable chaperone CsaA">
    <location>
        <begin position="1"/>
        <end position="110"/>
    </location>
</feature>
<feature type="domain" description="tRNA-binding" evidence="1">
    <location>
        <begin position="6"/>
        <end position="110"/>
    </location>
</feature>
<feature type="helix" evidence="8">
    <location>
        <begin position="2"/>
        <end position="9"/>
    </location>
</feature>
<feature type="strand" evidence="8">
    <location>
        <begin position="12"/>
        <end position="23"/>
    </location>
</feature>
<feature type="strand" evidence="8">
    <location>
        <begin position="26"/>
        <end position="28"/>
    </location>
</feature>
<feature type="strand" evidence="8">
    <location>
        <begin position="30"/>
        <end position="36"/>
    </location>
</feature>
<feature type="helix" evidence="8">
    <location>
        <begin position="38"/>
        <end position="41"/>
    </location>
</feature>
<feature type="strand" evidence="8">
    <location>
        <begin position="43"/>
        <end position="48"/>
    </location>
</feature>
<feature type="turn" evidence="8">
    <location>
        <begin position="51"/>
        <end position="53"/>
    </location>
</feature>
<feature type="helix" evidence="8">
    <location>
        <begin position="56"/>
        <end position="59"/>
    </location>
</feature>
<feature type="strand" evidence="8">
    <location>
        <begin position="63"/>
        <end position="67"/>
    </location>
</feature>
<feature type="strand" evidence="8">
    <location>
        <begin position="73"/>
        <end position="75"/>
    </location>
</feature>
<feature type="strand" evidence="8">
    <location>
        <begin position="78"/>
        <end position="80"/>
    </location>
</feature>
<feature type="strand" evidence="8">
    <location>
        <begin position="82"/>
        <end position="84"/>
    </location>
</feature>
<feature type="strand" evidence="8">
    <location>
        <begin position="86"/>
        <end position="90"/>
    </location>
</feature>
<feature type="strand" evidence="8">
    <location>
        <begin position="93"/>
        <end position="101"/>
    </location>
</feature>
<feature type="strand" evidence="8">
    <location>
        <begin position="108"/>
        <end position="110"/>
    </location>
</feature>
<comment type="function">
    <text evidence="6 7">Can suppress growth and secretion defects in E.coli secA and secB mutants (PubMed:1435734). Probably a molecular chaperone for exported proteins or may act by stabilizing the SecA protein (PubMed:10816431, PubMed:1435734).</text>
</comment>
<comment type="subunit">
    <text evidence="2 3 4">Homodimer (PubMed:17372352). Probably binds SecA and prePhoB (PubMed:10816431). Probably interacts with proSdpC (PubMed:13129613).</text>
</comment>
<comment type="subcellular location">
    <subcellularLocation>
        <location evidence="2">Cytoplasm</location>
    </subcellularLocation>
</comment>
<comment type="induction">
    <text evidence="2">Present in exponentially growing cells (at protein level).</text>
</comment>
<comment type="disruption phenotype">
    <text evidence="2">Grows normally, reduced secretion of SdpC (formerly YvaY) and another 36 kDa protein.</text>
</comment>
<keyword id="KW-0002">3D-structure</keyword>
<keyword id="KW-0143">Chaperone</keyword>
<keyword id="KW-0963">Cytoplasm</keyword>
<keyword id="KW-0653">Protein transport</keyword>
<keyword id="KW-1185">Reference proteome</keyword>
<keyword id="KW-0694">RNA-binding</keyword>
<keyword id="KW-0811">Translocation</keyword>
<keyword id="KW-0813">Transport</keyword>
<keyword id="KW-0820">tRNA-binding</keyword>
<protein>
    <recommendedName>
        <fullName evidence="5">Probable chaperone CsaA</fullName>
    </recommendedName>
</protein>
<reference key="1">
    <citation type="journal article" date="1992" name="Mol. Gen. Genet.">
        <title>Suppression of the growth and export defects of an Escherichia coli secA(Ts) mutant by a gene cloned from Bacillus subtilis.</title>
        <authorList>
            <person name="Mueller J."/>
            <person name="Walter F."/>
            <person name="van Dijl J.M."/>
            <person name="Behnke D."/>
        </authorList>
    </citation>
    <scope>NUCLEOTIDE SEQUENCE [GENOMIC DNA]</scope>
    <scope>POSSIBLE FUNCTION</scope>
    <source>
        <strain>168 / DB104</strain>
    </source>
</reference>
<reference key="2">
    <citation type="submission" date="1997-07" db="EMBL/GenBank/DDBJ databases">
        <authorList>
            <person name="Mueller J."/>
        </authorList>
    </citation>
    <scope>SEQUENCE REVISION</scope>
</reference>
<reference key="3">
    <citation type="submission" date="1997-11" db="EMBL/GenBank/DDBJ databases">
        <title>Sequence analysis of the Bacillus subtilis chromosome region between the terC and odhAB loci cloned in a yeast artificial chromosome.</title>
        <authorList>
            <person name="Lapidus A."/>
            <person name="Galleron N."/>
            <person name="Sorokin A."/>
            <person name="Ehrlich S.D."/>
        </authorList>
    </citation>
    <scope>NUCLEOTIDE SEQUENCE [GENOMIC DNA]</scope>
</reference>
<reference key="4">
    <citation type="journal article" date="1997" name="Nature">
        <title>The complete genome sequence of the Gram-positive bacterium Bacillus subtilis.</title>
        <authorList>
            <person name="Kunst F."/>
            <person name="Ogasawara N."/>
            <person name="Moszer I."/>
            <person name="Albertini A.M."/>
            <person name="Alloni G."/>
            <person name="Azevedo V."/>
            <person name="Bertero M.G."/>
            <person name="Bessieres P."/>
            <person name="Bolotin A."/>
            <person name="Borchert S."/>
            <person name="Borriss R."/>
            <person name="Boursier L."/>
            <person name="Brans A."/>
            <person name="Braun M."/>
            <person name="Brignell S.C."/>
            <person name="Bron S."/>
            <person name="Brouillet S."/>
            <person name="Bruschi C.V."/>
            <person name="Caldwell B."/>
            <person name="Capuano V."/>
            <person name="Carter N.M."/>
            <person name="Choi S.-K."/>
            <person name="Codani J.-J."/>
            <person name="Connerton I.F."/>
            <person name="Cummings N.J."/>
            <person name="Daniel R.A."/>
            <person name="Denizot F."/>
            <person name="Devine K.M."/>
            <person name="Duesterhoeft A."/>
            <person name="Ehrlich S.D."/>
            <person name="Emmerson P.T."/>
            <person name="Entian K.-D."/>
            <person name="Errington J."/>
            <person name="Fabret C."/>
            <person name="Ferrari E."/>
            <person name="Foulger D."/>
            <person name="Fritz C."/>
            <person name="Fujita M."/>
            <person name="Fujita Y."/>
            <person name="Fuma S."/>
            <person name="Galizzi A."/>
            <person name="Galleron N."/>
            <person name="Ghim S.-Y."/>
            <person name="Glaser P."/>
            <person name="Goffeau A."/>
            <person name="Golightly E.J."/>
            <person name="Grandi G."/>
            <person name="Guiseppi G."/>
            <person name="Guy B.J."/>
            <person name="Haga K."/>
            <person name="Haiech J."/>
            <person name="Harwood C.R."/>
            <person name="Henaut A."/>
            <person name="Hilbert H."/>
            <person name="Holsappel S."/>
            <person name="Hosono S."/>
            <person name="Hullo M.-F."/>
            <person name="Itaya M."/>
            <person name="Jones L.-M."/>
            <person name="Joris B."/>
            <person name="Karamata D."/>
            <person name="Kasahara Y."/>
            <person name="Klaerr-Blanchard M."/>
            <person name="Klein C."/>
            <person name="Kobayashi Y."/>
            <person name="Koetter P."/>
            <person name="Koningstein G."/>
            <person name="Krogh S."/>
            <person name="Kumano M."/>
            <person name="Kurita K."/>
            <person name="Lapidus A."/>
            <person name="Lardinois S."/>
            <person name="Lauber J."/>
            <person name="Lazarevic V."/>
            <person name="Lee S.-M."/>
            <person name="Levine A."/>
            <person name="Liu H."/>
            <person name="Masuda S."/>
            <person name="Mauel C."/>
            <person name="Medigue C."/>
            <person name="Medina N."/>
            <person name="Mellado R.P."/>
            <person name="Mizuno M."/>
            <person name="Moestl D."/>
            <person name="Nakai S."/>
            <person name="Noback M."/>
            <person name="Noone D."/>
            <person name="O'Reilly M."/>
            <person name="Ogawa K."/>
            <person name="Ogiwara A."/>
            <person name="Oudega B."/>
            <person name="Park S.-H."/>
            <person name="Parro V."/>
            <person name="Pohl T.M."/>
            <person name="Portetelle D."/>
            <person name="Porwollik S."/>
            <person name="Prescott A.M."/>
            <person name="Presecan E."/>
            <person name="Pujic P."/>
            <person name="Purnelle B."/>
            <person name="Rapoport G."/>
            <person name="Rey M."/>
            <person name="Reynolds S."/>
            <person name="Rieger M."/>
            <person name="Rivolta C."/>
            <person name="Rocha E."/>
            <person name="Roche B."/>
            <person name="Rose M."/>
            <person name="Sadaie Y."/>
            <person name="Sato T."/>
            <person name="Scanlan E."/>
            <person name="Schleich S."/>
            <person name="Schroeter R."/>
            <person name="Scoffone F."/>
            <person name="Sekiguchi J."/>
            <person name="Sekowska A."/>
            <person name="Seror S.J."/>
            <person name="Serror P."/>
            <person name="Shin B.-S."/>
            <person name="Soldo B."/>
            <person name="Sorokin A."/>
            <person name="Tacconi E."/>
            <person name="Takagi T."/>
            <person name="Takahashi H."/>
            <person name="Takemaru K."/>
            <person name="Takeuchi M."/>
            <person name="Tamakoshi A."/>
            <person name="Tanaka T."/>
            <person name="Terpstra P."/>
            <person name="Tognoni A."/>
            <person name="Tosato V."/>
            <person name="Uchiyama S."/>
            <person name="Vandenbol M."/>
            <person name="Vannier F."/>
            <person name="Vassarotti A."/>
            <person name="Viari A."/>
            <person name="Wambutt R."/>
            <person name="Wedler E."/>
            <person name="Wedler H."/>
            <person name="Weitzenegger T."/>
            <person name="Winters P."/>
            <person name="Wipat A."/>
            <person name="Yamamoto H."/>
            <person name="Yamane K."/>
            <person name="Yasumoto K."/>
            <person name="Yata K."/>
            <person name="Yoshida K."/>
            <person name="Yoshikawa H.-F."/>
            <person name="Zumstein E."/>
            <person name="Yoshikawa H."/>
            <person name="Danchin A."/>
        </authorList>
    </citation>
    <scope>NUCLEOTIDE SEQUENCE [LARGE SCALE GENOMIC DNA]</scope>
    <source>
        <strain>168</strain>
    </source>
</reference>
<reference key="5">
    <citation type="journal article" date="2000" name="Biochem. J.">
        <title>Interaction of Bacillus subtilis CsaA with SecA and precursor proteins.</title>
        <authorList>
            <person name="Mueller J.P."/>
            <person name="Ozegowski J."/>
            <person name="Vettermann S."/>
            <person name="Swaving J."/>
            <person name="Van Wely K.H."/>
            <person name="Driessen A.J."/>
        </authorList>
    </citation>
    <scope>FUNCTION</scope>
    <scope>SUBUNIT</scope>
    <scope>SUBCELLULAR LOCATION</scope>
    <scope>INDUCTION</scope>
    <scope>DISRUPTION PHENOTYPE</scope>
    <source>
        <strain>168 / DB104</strain>
    </source>
</reference>
<reference key="6">
    <citation type="journal article" date="2003" name="FEMS Microbiol. Lett.">
        <title>Interaction of the Bacillus subtilis chaperone CsaA with the secretory protein YvaY.</title>
        <authorList>
            <person name="Linde D."/>
            <person name="Volkmer-Engert R."/>
            <person name="Schreiber S."/>
            <person name="Mueller J.P."/>
        </authorList>
    </citation>
    <scope>SUBUNIT</scope>
</reference>
<reference key="7">
    <citation type="journal article" date="2007" name="Acta Crystallogr. D">
        <title>Crystallographic analysis of Bacillus subtilis CsaA.</title>
        <authorList>
            <person name="Shapova Y.A."/>
            <person name="Paetzel M."/>
        </authorList>
    </citation>
    <scope>X-RAY CRYSTALLOGRAPHY (1.90 ANGSTROMS)</scope>
    <scope>SUBUNIT</scope>
</reference>
<sequence length="110" mass="11907">MAVIDDFEKLDIRTGTIVKAEEFPEARVPAIKLVIDFGTEIGIKQSSAQITKRYKPEGLINKQVIAVVNFPPRRIAGFKSEVLVLGGIPGQGDVVLLQPDQPVPNGTKIG</sequence>
<gene>
    <name type="primary">csaA</name>
    <name type="ordered locus">BSU19040</name>
</gene>
<name>CSAA_BACSU</name>